<dbReference type="EC" id="3.3.2.9" evidence="3"/>
<dbReference type="EMBL" id="U46682">
    <property type="protein sequence ID" value="AAC47018.1"/>
    <property type="molecule type" value="mRNA"/>
</dbReference>
<dbReference type="PIR" id="JC4686">
    <property type="entry name" value="JC4686"/>
</dbReference>
<dbReference type="SMR" id="Q25489"/>
<dbReference type="BindingDB" id="Q25489"/>
<dbReference type="ESTHER" id="manse-hyep">
    <property type="family name" value="Epoxide_hydrolase"/>
</dbReference>
<dbReference type="MEROPS" id="S33.971"/>
<dbReference type="OrthoDB" id="7130006at2759"/>
<dbReference type="GO" id="GO:0005789">
    <property type="term" value="C:endoplasmic reticulum membrane"/>
    <property type="evidence" value="ECO:0007669"/>
    <property type="project" value="UniProtKB-SubCell"/>
</dbReference>
<dbReference type="GO" id="GO:0033961">
    <property type="term" value="F:cis-stilbene-oxide hydrolase activity"/>
    <property type="evidence" value="ECO:0007669"/>
    <property type="project" value="UniProtKB-EC"/>
</dbReference>
<dbReference type="GO" id="GO:0009056">
    <property type="term" value="P:catabolic process"/>
    <property type="evidence" value="ECO:0007669"/>
    <property type="project" value="UniProtKB-KW"/>
</dbReference>
<dbReference type="GO" id="GO:0097176">
    <property type="term" value="P:epoxide metabolic process"/>
    <property type="evidence" value="ECO:0007669"/>
    <property type="project" value="TreeGrafter"/>
</dbReference>
<dbReference type="Gene3D" id="3.40.50.1820">
    <property type="entry name" value="alpha/beta hydrolase"/>
    <property type="match status" value="1"/>
</dbReference>
<dbReference type="InterPro" id="IPR029058">
    <property type="entry name" value="AB_hydrolase_fold"/>
</dbReference>
<dbReference type="InterPro" id="IPR000639">
    <property type="entry name" value="Epox_hydrolase-like"/>
</dbReference>
<dbReference type="InterPro" id="IPR010497">
    <property type="entry name" value="Epoxide_hydro_N"/>
</dbReference>
<dbReference type="InterPro" id="IPR016292">
    <property type="entry name" value="Epoxide_hydrolase"/>
</dbReference>
<dbReference type="PANTHER" id="PTHR21661:SF35">
    <property type="entry name" value="EPOXIDE HYDROLASE"/>
    <property type="match status" value="1"/>
</dbReference>
<dbReference type="PANTHER" id="PTHR21661">
    <property type="entry name" value="EPOXIDE HYDROLASE 1-RELATED"/>
    <property type="match status" value="1"/>
</dbReference>
<dbReference type="Pfam" id="PF06441">
    <property type="entry name" value="EHN"/>
    <property type="match status" value="1"/>
</dbReference>
<dbReference type="PIRSF" id="PIRSF001112">
    <property type="entry name" value="Epoxide_hydrolase"/>
    <property type="match status" value="1"/>
</dbReference>
<dbReference type="PRINTS" id="PR00412">
    <property type="entry name" value="EPOXHYDRLASE"/>
</dbReference>
<dbReference type="SUPFAM" id="SSF53474">
    <property type="entry name" value="alpha/beta-Hydrolases"/>
    <property type="match status" value="1"/>
</dbReference>
<reference key="1">
    <citation type="journal article" date="1996" name="Biochem. Biophys. Res. Commun.">
        <title>An insect juvenile hormone-specific epoxide hydrolase is related to vertebrate microsomal epoxide hydrolases.</title>
        <authorList>
            <person name="Wojtasek H."/>
            <person name="Prestwich G.D."/>
        </authorList>
    </citation>
    <scope>NUCLEOTIDE SEQUENCE [MRNA]</scope>
    <scope>PROTEIN SEQUENCE OF 91-110 AND 237-250</scope>
    <source>
        <tissue>Egg</tissue>
    </source>
</reference>
<keyword id="KW-0058">Aromatic hydrocarbons catabolism</keyword>
<keyword id="KW-0903">Direct protein sequencing</keyword>
<keyword id="KW-0256">Endoplasmic reticulum</keyword>
<keyword id="KW-0378">Hydrolase</keyword>
<keyword id="KW-0472">Membrane</keyword>
<keyword id="KW-0492">Microsome</keyword>
<keyword id="KW-0812">Transmembrane</keyword>
<keyword id="KW-1133">Transmembrane helix</keyword>
<proteinExistence type="evidence at protein level"/>
<accession>Q25489</accession>
<comment type="function">
    <text evidence="3">Catalyzes juvenile hormone hydrolysis.</text>
</comment>
<comment type="catalytic activity">
    <reaction evidence="3">
        <text>cis-stilbene oxide + H2O = (1R,2R)-hydrobenzoin</text>
        <dbReference type="Rhea" id="RHEA:23900"/>
        <dbReference type="ChEBI" id="CHEBI:15377"/>
        <dbReference type="ChEBI" id="CHEBI:50004"/>
        <dbReference type="ChEBI" id="CHEBI:50014"/>
        <dbReference type="EC" id="3.3.2.9"/>
    </reaction>
</comment>
<comment type="catalytic activity">
    <reaction evidence="3">
        <text>1-(4-methoxyphenyl)-N-methyl-N-[(3-methyloxetan-3-yl)methyl]methanamine + H2O = 2-{[(4-methoxybenzyl)(methyl)amino]methyl}-2-methylpropane-1,3-diol</text>
        <dbReference type="Rhea" id="RHEA:55764"/>
        <dbReference type="ChEBI" id="CHEBI:15377"/>
        <dbReference type="ChEBI" id="CHEBI:139161"/>
        <dbReference type="ChEBI" id="CHEBI:139164"/>
        <dbReference type="EC" id="3.3.2.9"/>
    </reaction>
</comment>
<comment type="subcellular location">
    <subcellularLocation>
        <location evidence="3">Microsome membrane</location>
        <topology evidence="1">Single-pass membrane protein</topology>
    </subcellularLocation>
    <subcellularLocation>
        <location evidence="3">Endoplasmic reticulum membrane</location>
        <topology evidence="1">Single-pass membrane protein</topology>
    </subcellularLocation>
</comment>
<comment type="similarity">
    <text evidence="5">Belongs to the peptidase S33 family.</text>
</comment>
<evidence type="ECO:0000250" key="1">
    <source>
        <dbReference type="UniProtKB" id="P07687"/>
    </source>
</evidence>
<evidence type="ECO:0000250" key="2">
    <source>
        <dbReference type="UniProtKB" id="P34913"/>
    </source>
</evidence>
<evidence type="ECO:0000250" key="3">
    <source>
        <dbReference type="UniProtKB" id="Q6U6J0"/>
    </source>
</evidence>
<evidence type="ECO:0000255" key="4"/>
<evidence type="ECO:0000305" key="5"/>
<name>HYEP_MANSE</name>
<sequence length="462" mass="52612">MYKILSSFVAGVAIGSGLVITYVLYNVPEPPELDLQRWWGIGTRPTEEDKSIRPFSIDFNDTVILDLKERLKNRRPFTKPLEGINSEYGMNTEYLETVLEYWLNEYNFKKRAELLNKFPHYKTRIQGLDLHFIRVKPEIKEGVQVLPLLMMHGWPSSSKEFDKVIPILTTPKHEYNIVFEVVAVDLPGYGFSEGTNKPGLNPVQIGVMMRNLMLRLGFEKFYIQAGDWGSQCATHMATLFPDQVLGLHTNMPLSSRPLSTVKLFIGALFPSLIVDAKYMDRIYPLKNLFSYILRETGYFHIQATKPDTIGVALTDSPAGLAGYLIEKMAICSNRDQLDTPHGGLENLNLDDVLDTVTINWINNCIVTSTRLYAEGFSWPEVLIVHRIPSMVPTAGINFKYEVLYQPDWILRDKFPNLVRSTVLDFGGHFAALHTPQALADDIFASAVQFLKFHDRKRNQKSS</sequence>
<organism>
    <name type="scientific">Manduca sexta</name>
    <name type="common">Tobacco hawkmoth</name>
    <name type="synonym">Tobacco hornworm</name>
    <dbReference type="NCBI Taxonomy" id="7130"/>
    <lineage>
        <taxon>Eukaryota</taxon>
        <taxon>Metazoa</taxon>
        <taxon>Ecdysozoa</taxon>
        <taxon>Arthropoda</taxon>
        <taxon>Hexapoda</taxon>
        <taxon>Insecta</taxon>
        <taxon>Pterygota</taxon>
        <taxon>Neoptera</taxon>
        <taxon>Endopterygota</taxon>
        <taxon>Lepidoptera</taxon>
        <taxon>Glossata</taxon>
        <taxon>Ditrysia</taxon>
        <taxon>Bombycoidea</taxon>
        <taxon>Sphingidae</taxon>
        <taxon>Sphinginae</taxon>
        <taxon>Sphingini</taxon>
        <taxon>Manduca</taxon>
    </lineage>
</organism>
<protein>
    <recommendedName>
        <fullName>Juvenile hormone epoxide hydrolase</fullName>
        <shortName>JHEH</shortName>
        <ecNumber evidence="3">3.3.2.9</ecNumber>
    </recommendedName>
    <alternativeName>
        <fullName>Juvenile hormone-specific epoxide hydrolase</fullName>
    </alternativeName>
</protein>
<feature type="chain" id="PRO_0000080862" description="Juvenile hormone epoxide hydrolase">
    <location>
        <begin position="1"/>
        <end position="462"/>
    </location>
</feature>
<feature type="transmembrane region" description="Helical" evidence="4">
    <location>
        <begin position="4"/>
        <end position="24"/>
    </location>
</feature>
<feature type="active site" description="Nucleophile" evidence="1">
    <location>
        <position position="227"/>
    </location>
</feature>
<feature type="active site" description="Proton donor" evidence="2">
    <location>
        <position position="372"/>
    </location>
</feature>
<feature type="active site" description="Proton acceptor" evidence="1">
    <location>
        <position position="428"/>
    </location>
</feature>